<accession>B2K5Z1</accession>
<reference key="1">
    <citation type="submission" date="2008-04" db="EMBL/GenBank/DDBJ databases">
        <title>Complete sequence of Yersinia pseudotuberculosis PB1/+.</title>
        <authorList>
            <person name="Copeland A."/>
            <person name="Lucas S."/>
            <person name="Lapidus A."/>
            <person name="Glavina del Rio T."/>
            <person name="Dalin E."/>
            <person name="Tice H."/>
            <person name="Bruce D."/>
            <person name="Goodwin L."/>
            <person name="Pitluck S."/>
            <person name="Munk A.C."/>
            <person name="Brettin T."/>
            <person name="Detter J.C."/>
            <person name="Han C."/>
            <person name="Tapia R."/>
            <person name="Schmutz J."/>
            <person name="Larimer F."/>
            <person name="Land M."/>
            <person name="Hauser L."/>
            <person name="Challacombe J.F."/>
            <person name="Green L."/>
            <person name="Lindler L.E."/>
            <person name="Nikolich M.P."/>
            <person name="Richardson P."/>
        </authorList>
    </citation>
    <scope>NUCLEOTIDE SEQUENCE [LARGE SCALE GENOMIC DNA]</scope>
    <source>
        <strain>PB1/+</strain>
    </source>
</reference>
<comment type="function">
    <text evidence="1">This protein is located at the 30S-50S ribosomal subunit interface and may play a role in the structure and function of the aminoacyl-tRNA binding site.</text>
</comment>
<comment type="similarity">
    <text evidence="1">Belongs to the bacterial ribosomal protein bL19 family.</text>
</comment>
<gene>
    <name evidence="1" type="primary">rplS</name>
    <name type="ordered locus">YPTS_0873</name>
</gene>
<sequence>MSNIIKQIEQEQMKQDVPAFRPGDSVEVKVWVVEGSKKRLQAFEGVVIAIRNRGLHSAFTVRKISNGEGVERVFQTHSPVIDSITVKRRGAVRQAKLYYLRERTGKSARIKERLG</sequence>
<organism>
    <name type="scientific">Yersinia pseudotuberculosis serotype IB (strain PB1/+)</name>
    <dbReference type="NCBI Taxonomy" id="502801"/>
    <lineage>
        <taxon>Bacteria</taxon>
        <taxon>Pseudomonadati</taxon>
        <taxon>Pseudomonadota</taxon>
        <taxon>Gammaproteobacteria</taxon>
        <taxon>Enterobacterales</taxon>
        <taxon>Yersiniaceae</taxon>
        <taxon>Yersinia</taxon>
    </lineage>
</organism>
<name>RL19_YERPB</name>
<proteinExistence type="inferred from homology"/>
<evidence type="ECO:0000255" key="1">
    <source>
        <dbReference type="HAMAP-Rule" id="MF_00402"/>
    </source>
</evidence>
<evidence type="ECO:0000305" key="2"/>
<feature type="chain" id="PRO_1000193926" description="Large ribosomal subunit protein bL19">
    <location>
        <begin position="1"/>
        <end position="115"/>
    </location>
</feature>
<protein>
    <recommendedName>
        <fullName evidence="1">Large ribosomal subunit protein bL19</fullName>
    </recommendedName>
    <alternativeName>
        <fullName evidence="2">50S ribosomal protein L19</fullName>
    </alternativeName>
</protein>
<dbReference type="EMBL" id="CP001048">
    <property type="protein sequence ID" value="ACC87857.1"/>
    <property type="molecule type" value="Genomic_DNA"/>
</dbReference>
<dbReference type="RefSeq" id="WP_002209461.1">
    <property type="nucleotide sequence ID" value="NZ_CP009780.1"/>
</dbReference>
<dbReference type="SMR" id="B2K5Z1"/>
<dbReference type="GeneID" id="96664344"/>
<dbReference type="KEGG" id="ypb:YPTS_0873"/>
<dbReference type="PATRIC" id="fig|502801.10.peg.207"/>
<dbReference type="GO" id="GO:0022625">
    <property type="term" value="C:cytosolic large ribosomal subunit"/>
    <property type="evidence" value="ECO:0007669"/>
    <property type="project" value="TreeGrafter"/>
</dbReference>
<dbReference type="GO" id="GO:0003735">
    <property type="term" value="F:structural constituent of ribosome"/>
    <property type="evidence" value="ECO:0007669"/>
    <property type="project" value="InterPro"/>
</dbReference>
<dbReference type="GO" id="GO:0006412">
    <property type="term" value="P:translation"/>
    <property type="evidence" value="ECO:0007669"/>
    <property type="project" value="UniProtKB-UniRule"/>
</dbReference>
<dbReference type="FunFam" id="2.30.30.790:FF:000001">
    <property type="entry name" value="50S ribosomal protein L19"/>
    <property type="match status" value="1"/>
</dbReference>
<dbReference type="Gene3D" id="2.30.30.790">
    <property type="match status" value="1"/>
</dbReference>
<dbReference type="HAMAP" id="MF_00402">
    <property type="entry name" value="Ribosomal_bL19"/>
    <property type="match status" value="1"/>
</dbReference>
<dbReference type="InterPro" id="IPR001857">
    <property type="entry name" value="Ribosomal_bL19"/>
</dbReference>
<dbReference type="InterPro" id="IPR018257">
    <property type="entry name" value="Ribosomal_bL19_CS"/>
</dbReference>
<dbReference type="InterPro" id="IPR038657">
    <property type="entry name" value="Ribosomal_bL19_sf"/>
</dbReference>
<dbReference type="InterPro" id="IPR008991">
    <property type="entry name" value="Translation_prot_SH3-like_sf"/>
</dbReference>
<dbReference type="NCBIfam" id="TIGR01024">
    <property type="entry name" value="rplS_bact"/>
    <property type="match status" value="1"/>
</dbReference>
<dbReference type="PANTHER" id="PTHR15680:SF9">
    <property type="entry name" value="LARGE RIBOSOMAL SUBUNIT PROTEIN BL19M"/>
    <property type="match status" value="1"/>
</dbReference>
<dbReference type="PANTHER" id="PTHR15680">
    <property type="entry name" value="RIBOSOMAL PROTEIN L19"/>
    <property type="match status" value="1"/>
</dbReference>
<dbReference type="Pfam" id="PF01245">
    <property type="entry name" value="Ribosomal_L19"/>
    <property type="match status" value="1"/>
</dbReference>
<dbReference type="PIRSF" id="PIRSF002191">
    <property type="entry name" value="Ribosomal_L19"/>
    <property type="match status" value="1"/>
</dbReference>
<dbReference type="PRINTS" id="PR00061">
    <property type="entry name" value="RIBOSOMALL19"/>
</dbReference>
<dbReference type="SUPFAM" id="SSF50104">
    <property type="entry name" value="Translation proteins SH3-like domain"/>
    <property type="match status" value="1"/>
</dbReference>
<dbReference type="PROSITE" id="PS01015">
    <property type="entry name" value="RIBOSOMAL_L19"/>
    <property type="match status" value="1"/>
</dbReference>
<keyword id="KW-0687">Ribonucleoprotein</keyword>
<keyword id="KW-0689">Ribosomal protein</keyword>